<comment type="function">
    <text evidence="1">Catalyzes the conversion of dihydroorotate to orotate with quinone as electron acceptor.</text>
</comment>
<comment type="catalytic activity">
    <reaction evidence="1">
        <text>(S)-dihydroorotate + a quinone = orotate + a quinol</text>
        <dbReference type="Rhea" id="RHEA:30187"/>
        <dbReference type="ChEBI" id="CHEBI:24646"/>
        <dbReference type="ChEBI" id="CHEBI:30839"/>
        <dbReference type="ChEBI" id="CHEBI:30864"/>
        <dbReference type="ChEBI" id="CHEBI:132124"/>
        <dbReference type="EC" id="1.3.5.2"/>
    </reaction>
</comment>
<comment type="cofactor">
    <cofactor evidence="1">
        <name>FMN</name>
        <dbReference type="ChEBI" id="CHEBI:58210"/>
    </cofactor>
    <text evidence="1">Binds 1 FMN per subunit.</text>
</comment>
<comment type="pathway">
    <text evidence="1">Pyrimidine metabolism; UMP biosynthesis via de novo pathway; orotate from (S)-dihydroorotate (quinone route): step 1/1.</text>
</comment>
<comment type="subunit">
    <text evidence="1">Monomer.</text>
</comment>
<comment type="subcellular location">
    <subcellularLocation>
        <location evidence="1">Cell membrane</location>
        <topology evidence="1">Peripheral membrane protein</topology>
    </subcellularLocation>
</comment>
<comment type="similarity">
    <text evidence="1">Belongs to the dihydroorotate dehydrogenase family. Type 2 subfamily.</text>
</comment>
<protein>
    <recommendedName>
        <fullName evidence="1">Dihydroorotate dehydrogenase (quinone)</fullName>
        <ecNumber evidence="1">1.3.5.2</ecNumber>
    </recommendedName>
    <alternativeName>
        <fullName evidence="1">DHOdehase</fullName>
        <shortName evidence="1">DHOD</shortName>
        <shortName evidence="1">DHODase</shortName>
    </alternativeName>
    <alternativeName>
        <fullName evidence="1">Dihydroorotate oxidase</fullName>
    </alternativeName>
</protein>
<gene>
    <name evidence="1" type="primary">pyrD</name>
    <name type="ordered locus">BBta_0793</name>
</gene>
<organism>
    <name type="scientific">Bradyrhizobium sp. (strain BTAi1 / ATCC BAA-1182)</name>
    <dbReference type="NCBI Taxonomy" id="288000"/>
    <lineage>
        <taxon>Bacteria</taxon>
        <taxon>Pseudomonadati</taxon>
        <taxon>Pseudomonadota</taxon>
        <taxon>Alphaproteobacteria</taxon>
        <taxon>Hyphomicrobiales</taxon>
        <taxon>Nitrobacteraceae</taxon>
        <taxon>Bradyrhizobium</taxon>
    </lineage>
</organism>
<sequence>MIRAFDQLSLPLLRWLDAEDAHRLAIQGLKLLPAIKPRPDDAKLAVRAFGLNFPNPVGMAAGFDKNAEVPDALLRLGFGFVEIGSVTPRPQSGNPRPRLFRLERDEAVVNRMGFNNDGAEIVLRRLAGRANQGGIVGVNVGANKDSADRVADYVRLIETFAPVASYFTVNISSPNTPGLRNLQQAAQLNELLSKVLEARDRVRRKAGDTPVLLKIAPDLSLAELDDVVHVARSRGVDGMIVSNTTLARPNSLREQLRAKEQGGLSGRPLFRLSTRMVAETFVRVEGAFPLIGVGGIDSGGAALTKIRAGASLIQLYSSLVYKGLGLVESIKADLTSTLLRTGRDSLSEIVGADAATITAEDWPV</sequence>
<accession>A5EA61</accession>
<name>PYRD_BRASB</name>
<proteinExistence type="inferred from homology"/>
<reference key="1">
    <citation type="journal article" date="2007" name="Science">
        <title>Legumes symbioses: absence of nod genes in photosynthetic bradyrhizobia.</title>
        <authorList>
            <person name="Giraud E."/>
            <person name="Moulin L."/>
            <person name="Vallenet D."/>
            <person name="Barbe V."/>
            <person name="Cytryn E."/>
            <person name="Avarre J.-C."/>
            <person name="Jaubert M."/>
            <person name="Simon D."/>
            <person name="Cartieaux F."/>
            <person name="Prin Y."/>
            <person name="Bena G."/>
            <person name="Hannibal L."/>
            <person name="Fardoux J."/>
            <person name="Kojadinovic M."/>
            <person name="Vuillet L."/>
            <person name="Lajus A."/>
            <person name="Cruveiller S."/>
            <person name="Rouy Z."/>
            <person name="Mangenot S."/>
            <person name="Segurens B."/>
            <person name="Dossat C."/>
            <person name="Franck W.L."/>
            <person name="Chang W.-S."/>
            <person name="Saunders E."/>
            <person name="Bruce D."/>
            <person name="Richardson P."/>
            <person name="Normand P."/>
            <person name="Dreyfus B."/>
            <person name="Pignol D."/>
            <person name="Stacey G."/>
            <person name="Emerich D."/>
            <person name="Vermeglio A."/>
            <person name="Medigue C."/>
            <person name="Sadowsky M."/>
        </authorList>
    </citation>
    <scope>NUCLEOTIDE SEQUENCE [LARGE SCALE GENOMIC DNA]</scope>
    <source>
        <strain>BTAi1 / ATCC BAA-1182</strain>
    </source>
</reference>
<evidence type="ECO:0000255" key="1">
    <source>
        <dbReference type="HAMAP-Rule" id="MF_00225"/>
    </source>
</evidence>
<feature type="chain" id="PRO_1000100250" description="Dihydroorotate dehydrogenase (quinone)">
    <location>
        <begin position="1"/>
        <end position="364"/>
    </location>
</feature>
<feature type="active site" description="Nucleophile" evidence="1">
    <location>
        <position position="173"/>
    </location>
</feature>
<feature type="binding site" evidence="1">
    <location>
        <begin position="61"/>
        <end position="65"/>
    </location>
    <ligand>
        <name>FMN</name>
        <dbReference type="ChEBI" id="CHEBI:58210"/>
    </ligand>
</feature>
<feature type="binding site" evidence="1">
    <location>
        <position position="65"/>
    </location>
    <ligand>
        <name>substrate</name>
    </ligand>
</feature>
<feature type="binding site" evidence="1">
    <location>
        <position position="85"/>
    </location>
    <ligand>
        <name>FMN</name>
        <dbReference type="ChEBI" id="CHEBI:58210"/>
    </ligand>
</feature>
<feature type="binding site" evidence="1">
    <location>
        <begin position="110"/>
        <end position="114"/>
    </location>
    <ligand>
        <name>substrate</name>
    </ligand>
</feature>
<feature type="binding site" evidence="1">
    <location>
        <position position="139"/>
    </location>
    <ligand>
        <name>FMN</name>
        <dbReference type="ChEBI" id="CHEBI:58210"/>
    </ligand>
</feature>
<feature type="binding site" evidence="1">
    <location>
        <position position="170"/>
    </location>
    <ligand>
        <name>FMN</name>
        <dbReference type="ChEBI" id="CHEBI:58210"/>
    </ligand>
</feature>
<feature type="binding site" evidence="1">
    <location>
        <position position="170"/>
    </location>
    <ligand>
        <name>substrate</name>
    </ligand>
</feature>
<feature type="binding site" evidence="1">
    <location>
        <position position="175"/>
    </location>
    <ligand>
        <name>substrate</name>
    </ligand>
</feature>
<feature type="binding site" evidence="1">
    <location>
        <position position="214"/>
    </location>
    <ligand>
        <name>FMN</name>
        <dbReference type="ChEBI" id="CHEBI:58210"/>
    </ligand>
</feature>
<feature type="binding site" evidence="1">
    <location>
        <position position="242"/>
    </location>
    <ligand>
        <name>FMN</name>
        <dbReference type="ChEBI" id="CHEBI:58210"/>
    </ligand>
</feature>
<feature type="binding site" evidence="1">
    <location>
        <begin position="243"/>
        <end position="244"/>
    </location>
    <ligand>
        <name>substrate</name>
    </ligand>
</feature>
<feature type="binding site" evidence="1">
    <location>
        <position position="266"/>
    </location>
    <ligand>
        <name>FMN</name>
        <dbReference type="ChEBI" id="CHEBI:58210"/>
    </ligand>
</feature>
<feature type="binding site" evidence="1">
    <location>
        <position position="295"/>
    </location>
    <ligand>
        <name>FMN</name>
        <dbReference type="ChEBI" id="CHEBI:58210"/>
    </ligand>
</feature>
<feature type="binding site" evidence="1">
    <location>
        <begin position="316"/>
        <end position="317"/>
    </location>
    <ligand>
        <name>FMN</name>
        <dbReference type="ChEBI" id="CHEBI:58210"/>
    </ligand>
</feature>
<keyword id="KW-1003">Cell membrane</keyword>
<keyword id="KW-0285">Flavoprotein</keyword>
<keyword id="KW-0288">FMN</keyword>
<keyword id="KW-0472">Membrane</keyword>
<keyword id="KW-0560">Oxidoreductase</keyword>
<keyword id="KW-0665">Pyrimidine biosynthesis</keyword>
<keyword id="KW-1185">Reference proteome</keyword>
<dbReference type="EC" id="1.3.5.2" evidence="1"/>
<dbReference type="EMBL" id="CP000494">
    <property type="protein sequence ID" value="ABQ33055.1"/>
    <property type="molecule type" value="Genomic_DNA"/>
</dbReference>
<dbReference type="RefSeq" id="WP_012041106.1">
    <property type="nucleotide sequence ID" value="NC_009485.1"/>
</dbReference>
<dbReference type="SMR" id="A5EA61"/>
<dbReference type="STRING" id="288000.BBta_0793"/>
<dbReference type="KEGG" id="bbt:BBta_0793"/>
<dbReference type="eggNOG" id="COG0167">
    <property type="taxonomic scope" value="Bacteria"/>
</dbReference>
<dbReference type="HOGENOM" id="CLU_013640_2_1_5"/>
<dbReference type="OrthoDB" id="9802377at2"/>
<dbReference type="UniPathway" id="UPA00070">
    <property type="reaction ID" value="UER00946"/>
</dbReference>
<dbReference type="Proteomes" id="UP000000246">
    <property type="component" value="Chromosome"/>
</dbReference>
<dbReference type="GO" id="GO:0005737">
    <property type="term" value="C:cytoplasm"/>
    <property type="evidence" value="ECO:0007669"/>
    <property type="project" value="InterPro"/>
</dbReference>
<dbReference type="GO" id="GO:0005886">
    <property type="term" value="C:plasma membrane"/>
    <property type="evidence" value="ECO:0007669"/>
    <property type="project" value="UniProtKB-SubCell"/>
</dbReference>
<dbReference type="GO" id="GO:0106430">
    <property type="term" value="F:dihydroorotate dehydrogenase (quinone) activity"/>
    <property type="evidence" value="ECO:0007669"/>
    <property type="project" value="UniProtKB-EC"/>
</dbReference>
<dbReference type="GO" id="GO:0006207">
    <property type="term" value="P:'de novo' pyrimidine nucleobase biosynthetic process"/>
    <property type="evidence" value="ECO:0007669"/>
    <property type="project" value="InterPro"/>
</dbReference>
<dbReference type="GO" id="GO:0044205">
    <property type="term" value="P:'de novo' UMP biosynthetic process"/>
    <property type="evidence" value="ECO:0007669"/>
    <property type="project" value="UniProtKB-UniRule"/>
</dbReference>
<dbReference type="CDD" id="cd04738">
    <property type="entry name" value="DHOD_2_like"/>
    <property type="match status" value="1"/>
</dbReference>
<dbReference type="Gene3D" id="3.20.20.70">
    <property type="entry name" value="Aldolase class I"/>
    <property type="match status" value="1"/>
</dbReference>
<dbReference type="HAMAP" id="MF_00225">
    <property type="entry name" value="DHO_dh_type2"/>
    <property type="match status" value="1"/>
</dbReference>
<dbReference type="InterPro" id="IPR013785">
    <property type="entry name" value="Aldolase_TIM"/>
</dbReference>
<dbReference type="InterPro" id="IPR050074">
    <property type="entry name" value="DHO_dehydrogenase"/>
</dbReference>
<dbReference type="InterPro" id="IPR005719">
    <property type="entry name" value="Dihydroorotate_DH_2"/>
</dbReference>
<dbReference type="InterPro" id="IPR005720">
    <property type="entry name" value="Dihydroorotate_DH_cat"/>
</dbReference>
<dbReference type="InterPro" id="IPR001295">
    <property type="entry name" value="Dihydroorotate_DH_CS"/>
</dbReference>
<dbReference type="NCBIfam" id="NF003645">
    <property type="entry name" value="PRK05286.1-2"/>
    <property type="match status" value="1"/>
</dbReference>
<dbReference type="NCBIfam" id="NF003652">
    <property type="entry name" value="PRK05286.2-5"/>
    <property type="match status" value="1"/>
</dbReference>
<dbReference type="NCBIfam" id="TIGR01036">
    <property type="entry name" value="pyrD_sub2"/>
    <property type="match status" value="1"/>
</dbReference>
<dbReference type="PANTHER" id="PTHR48109:SF4">
    <property type="entry name" value="DIHYDROOROTATE DEHYDROGENASE (QUINONE), MITOCHONDRIAL"/>
    <property type="match status" value="1"/>
</dbReference>
<dbReference type="PANTHER" id="PTHR48109">
    <property type="entry name" value="DIHYDROOROTATE DEHYDROGENASE (QUINONE), MITOCHONDRIAL-RELATED"/>
    <property type="match status" value="1"/>
</dbReference>
<dbReference type="Pfam" id="PF01180">
    <property type="entry name" value="DHO_dh"/>
    <property type="match status" value="1"/>
</dbReference>
<dbReference type="SUPFAM" id="SSF51395">
    <property type="entry name" value="FMN-linked oxidoreductases"/>
    <property type="match status" value="1"/>
</dbReference>
<dbReference type="PROSITE" id="PS00911">
    <property type="entry name" value="DHODEHASE_1"/>
    <property type="match status" value="1"/>
</dbReference>
<dbReference type="PROSITE" id="PS00912">
    <property type="entry name" value="DHODEHASE_2"/>
    <property type="match status" value="1"/>
</dbReference>